<sequence>MVRYRVRSPSEPSHEVYRQQLHGQEQGHHGQEEQGLSPEHVEVYERTHGHSHYRRRHCSRRRLRRIHRQQHRSCRRRKRRSCRHRRRHRRGCRTRRRTCRKH</sequence>
<evidence type="ECO:0000250" key="1">
    <source>
        <dbReference type="UniProtKB" id="P07978"/>
    </source>
</evidence>
<evidence type="ECO:0000250" key="2">
    <source>
        <dbReference type="UniProtKB" id="P11248"/>
    </source>
</evidence>
<evidence type="ECO:0000256" key="3">
    <source>
        <dbReference type="SAM" id="MobiDB-lite"/>
    </source>
</evidence>
<evidence type="ECO:0000305" key="4"/>
<name>PRM2_PANPA</name>
<organism>
    <name type="scientific">Pan paniscus</name>
    <name type="common">Pygmy chimpanzee</name>
    <name type="synonym">Bonobo</name>
    <dbReference type="NCBI Taxonomy" id="9597"/>
    <lineage>
        <taxon>Eukaryota</taxon>
        <taxon>Metazoa</taxon>
        <taxon>Chordata</taxon>
        <taxon>Craniata</taxon>
        <taxon>Vertebrata</taxon>
        <taxon>Euteleostomi</taxon>
        <taxon>Mammalia</taxon>
        <taxon>Eutheria</taxon>
        <taxon>Euarchontoglires</taxon>
        <taxon>Primates</taxon>
        <taxon>Haplorrhini</taxon>
        <taxon>Catarrhini</taxon>
        <taxon>Hominidae</taxon>
        <taxon>Pan</taxon>
    </lineage>
</organism>
<keyword id="KW-0158">Chromosome</keyword>
<keyword id="KW-0217">Developmental protein</keyword>
<keyword id="KW-0221">Differentiation</keyword>
<keyword id="KW-0226">DNA condensation</keyword>
<keyword id="KW-0238">DNA-binding</keyword>
<keyword id="KW-0544">Nucleosome core</keyword>
<keyword id="KW-0539">Nucleus</keyword>
<keyword id="KW-0597">Phosphoprotein</keyword>
<keyword id="KW-1185">Reference proteome</keyword>
<keyword id="KW-0744">Spermatogenesis</keyword>
<gene>
    <name type="primary">PRM2</name>
</gene>
<protein>
    <recommendedName>
        <fullName>Protamine-2</fullName>
    </recommendedName>
    <alternativeName>
        <fullName>Sperm histone P2</fullName>
    </alternativeName>
    <alternativeName>
        <fullName>Sperm protamine P2</fullName>
    </alternativeName>
</protein>
<proteinExistence type="evidence at transcript level"/>
<comment type="function">
    <text evidence="1">Protamines substitute for histones in the chromatin of sperm during the haploid phase of spermatogenesis. They compact sperm DNA into a highly condensed, stable and inactive complex.</text>
</comment>
<comment type="subunit">
    <text evidence="1">Interacts with TDRP.</text>
</comment>
<comment type="subcellular location">
    <subcellularLocation>
        <location evidence="1">Nucleus</location>
    </subcellularLocation>
    <subcellularLocation>
        <location evidence="1">Chromosome</location>
    </subcellularLocation>
</comment>
<comment type="tissue specificity">
    <text>Testis.</text>
</comment>
<comment type="PTM">
    <text evidence="1">Proteolytic processing into mature chains is required for histone eviction during spermatogenesis. Transition proteins (TNP1 and TNP2) are required for processing.</text>
</comment>
<comment type="similarity">
    <text evidence="4">Belongs to the protamine P2 family.</text>
</comment>
<accession>P35299</accession>
<feature type="chain" id="PRO_0000191604" description="Protamine-2">
    <location>
        <begin position="1"/>
        <end position="102"/>
    </location>
</feature>
<feature type="region of interest" description="Disordered" evidence="3">
    <location>
        <begin position="1"/>
        <end position="102"/>
    </location>
</feature>
<feature type="compositionally biased region" description="Basic and acidic residues" evidence="3">
    <location>
        <begin position="39"/>
        <end position="48"/>
    </location>
</feature>
<feature type="compositionally biased region" description="Basic residues" evidence="3">
    <location>
        <begin position="49"/>
        <end position="102"/>
    </location>
</feature>
<feature type="modified residue" description="Phosphoserine" evidence="2">
    <location>
        <position position="8"/>
    </location>
</feature>
<feature type="modified residue" description="Phosphoserine" evidence="2">
    <location>
        <position position="10"/>
    </location>
</feature>
<feature type="modified residue" description="Phosphoserine" evidence="2">
    <location>
        <position position="37"/>
    </location>
</feature>
<reference key="1">
    <citation type="journal article" date="1993" name="Eur. J. Biochem.">
        <title>Evolution of pro-protamine P2 genes in primates.</title>
        <authorList>
            <person name="Retief J.D."/>
            <person name="Dixon G.H."/>
        </authorList>
    </citation>
    <scope>NUCLEOTIDE SEQUENCE [GENOMIC DNA]</scope>
</reference>
<reference key="2">
    <citation type="journal article" date="1993" name="Eur. J. Biochem.">
        <authorList>
            <person name="Retief J.D."/>
            <person name="Dixon G.H."/>
        </authorList>
    </citation>
    <scope>ERRATUM OF PUBMED:8513810</scope>
</reference>
<reference key="3">
    <citation type="journal article" date="2000" name="Nature">
        <title>Rapid evolution of male reproductive genes in the descent of man.</title>
        <authorList>
            <person name="Wyckoff G.J."/>
            <person name="Wang W."/>
            <person name="Wu C.-I."/>
        </authorList>
    </citation>
    <scope>NUCLEOTIDE SEQUENCE [GENOMIC DNA]</scope>
</reference>
<dbReference type="EMBL" id="X71334">
    <property type="protein sequence ID" value="CAA50474.1"/>
    <property type="molecule type" value="Genomic_DNA"/>
</dbReference>
<dbReference type="EMBL" id="AF215724">
    <property type="protein sequence ID" value="AAF34629.1"/>
    <property type="molecule type" value="Genomic_DNA"/>
</dbReference>
<dbReference type="EMBL" id="AF215723">
    <property type="protein sequence ID" value="AAF34629.1"/>
    <property type="status" value="JOINED"/>
    <property type="molecule type" value="Genomic_DNA"/>
</dbReference>
<dbReference type="PIR" id="S33332">
    <property type="entry name" value="S33332"/>
</dbReference>
<dbReference type="RefSeq" id="XP_008958610.1">
    <property type="nucleotide sequence ID" value="XM_008960362.5"/>
</dbReference>
<dbReference type="STRING" id="9597.ENSPPAP00000022904"/>
<dbReference type="Ensembl" id="ENSPPAT00000045714.1">
    <property type="protein sequence ID" value="ENSPPAP00000022899.1"/>
    <property type="gene ID" value="ENSPPAG00000034628.1"/>
</dbReference>
<dbReference type="GeneID" id="100970844"/>
<dbReference type="KEGG" id="pps:100970844"/>
<dbReference type="CTD" id="5620"/>
<dbReference type="eggNOG" id="ENOG502TD5P">
    <property type="taxonomic scope" value="Eukaryota"/>
</dbReference>
<dbReference type="GeneTree" id="ENSGT00940000163619"/>
<dbReference type="OMA" id="PCAPIPG"/>
<dbReference type="Proteomes" id="UP000240080">
    <property type="component" value="Chromosome 16"/>
</dbReference>
<dbReference type="Bgee" id="ENSPPAG00000034628">
    <property type="expression patterns" value="Expressed in testis and 2 other cell types or tissues"/>
</dbReference>
<dbReference type="GO" id="GO:0000786">
    <property type="term" value="C:nucleosome"/>
    <property type="evidence" value="ECO:0007669"/>
    <property type="project" value="UniProtKB-KW"/>
</dbReference>
<dbReference type="GO" id="GO:0005634">
    <property type="term" value="C:nucleus"/>
    <property type="evidence" value="ECO:0007669"/>
    <property type="project" value="UniProtKB-SubCell"/>
</dbReference>
<dbReference type="GO" id="GO:0003677">
    <property type="term" value="F:DNA binding"/>
    <property type="evidence" value="ECO:0007669"/>
    <property type="project" value="UniProtKB-KW"/>
</dbReference>
<dbReference type="GO" id="GO:0030261">
    <property type="term" value="P:chromosome condensation"/>
    <property type="evidence" value="ECO:0007669"/>
    <property type="project" value="UniProtKB-KW"/>
</dbReference>
<dbReference type="GO" id="GO:0006997">
    <property type="term" value="P:nucleus organization"/>
    <property type="evidence" value="ECO:0007669"/>
    <property type="project" value="TreeGrafter"/>
</dbReference>
<dbReference type="GO" id="GO:0007286">
    <property type="term" value="P:spermatid development"/>
    <property type="evidence" value="ECO:0007669"/>
    <property type="project" value="InterPro"/>
</dbReference>
<dbReference type="GO" id="GO:0007283">
    <property type="term" value="P:spermatogenesis"/>
    <property type="evidence" value="ECO:0000250"/>
    <property type="project" value="UniProtKB"/>
</dbReference>
<dbReference type="InterPro" id="IPR000492">
    <property type="entry name" value="PRM2"/>
</dbReference>
<dbReference type="PANTHER" id="PTHR21341">
    <property type="entry name" value="PROTAMINE-2"/>
    <property type="match status" value="1"/>
</dbReference>
<dbReference type="PANTHER" id="PTHR21341:SF2">
    <property type="entry name" value="PROTAMINE-2"/>
    <property type="match status" value="1"/>
</dbReference>
<dbReference type="Pfam" id="PF00841">
    <property type="entry name" value="Protamine_P2"/>
    <property type="match status" value="1"/>
</dbReference>